<accession>Q0I136</accession>
<protein>
    <recommendedName>
        <fullName evidence="1">Large ribosomal subunit protein bL17</fullName>
    </recommendedName>
    <alternativeName>
        <fullName evidence="2">50S ribosomal protein L17</fullName>
    </alternativeName>
</protein>
<sequence length="128" mass="14452">MRHRKSGRQLNRNSSHRQALFRNLASALVSHEIIKTTLPKAKELRRVVEPLITLAKVDSVANRRLAFARTRNIETVAKLFNELGPRFAQRAGGYTRILKCGFRAGDNAPMAYIELVDRPALAEEAKTE</sequence>
<reference key="1">
    <citation type="journal article" date="2007" name="J. Bacteriol.">
        <title>Complete genome sequence of Haemophilus somnus (Histophilus somni) strain 129Pt and comparison to Haemophilus ducreyi 35000HP and Haemophilus influenzae Rd.</title>
        <authorList>
            <person name="Challacombe J.F."/>
            <person name="Duncan A.J."/>
            <person name="Brettin T.S."/>
            <person name="Bruce D."/>
            <person name="Chertkov O."/>
            <person name="Detter J.C."/>
            <person name="Han C.S."/>
            <person name="Misra M."/>
            <person name="Richardson P."/>
            <person name="Tapia R."/>
            <person name="Thayer N."/>
            <person name="Xie G."/>
            <person name="Inzana T.J."/>
        </authorList>
    </citation>
    <scope>NUCLEOTIDE SEQUENCE [LARGE SCALE GENOMIC DNA]</scope>
    <source>
        <strain>129Pt</strain>
    </source>
</reference>
<comment type="subunit">
    <text evidence="1">Part of the 50S ribosomal subunit. Contacts protein L32.</text>
</comment>
<comment type="similarity">
    <text evidence="1">Belongs to the bacterial ribosomal protein bL17 family.</text>
</comment>
<gene>
    <name evidence="1" type="primary">rplQ</name>
    <name type="ordered locus">HS_0085</name>
</gene>
<name>RL17_HISS1</name>
<keyword id="KW-0687">Ribonucleoprotein</keyword>
<keyword id="KW-0689">Ribosomal protein</keyword>
<dbReference type="EMBL" id="CP000436">
    <property type="protein sequence ID" value="ABI24366.1"/>
    <property type="molecule type" value="Genomic_DNA"/>
</dbReference>
<dbReference type="SMR" id="Q0I136"/>
<dbReference type="KEGG" id="hso:HS_0085"/>
<dbReference type="eggNOG" id="COG0203">
    <property type="taxonomic scope" value="Bacteria"/>
</dbReference>
<dbReference type="HOGENOM" id="CLU_074407_2_0_6"/>
<dbReference type="GO" id="GO:0022625">
    <property type="term" value="C:cytosolic large ribosomal subunit"/>
    <property type="evidence" value="ECO:0007669"/>
    <property type="project" value="TreeGrafter"/>
</dbReference>
<dbReference type="GO" id="GO:0003735">
    <property type="term" value="F:structural constituent of ribosome"/>
    <property type="evidence" value="ECO:0007669"/>
    <property type="project" value="InterPro"/>
</dbReference>
<dbReference type="GO" id="GO:0006412">
    <property type="term" value="P:translation"/>
    <property type="evidence" value="ECO:0007669"/>
    <property type="project" value="UniProtKB-UniRule"/>
</dbReference>
<dbReference type="FunFam" id="3.90.1030.10:FF:000001">
    <property type="entry name" value="50S ribosomal protein L17"/>
    <property type="match status" value="1"/>
</dbReference>
<dbReference type="Gene3D" id="3.90.1030.10">
    <property type="entry name" value="Ribosomal protein L17"/>
    <property type="match status" value="1"/>
</dbReference>
<dbReference type="HAMAP" id="MF_01368">
    <property type="entry name" value="Ribosomal_bL17"/>
    <property type="match status" value="1"/>
</dbReference>
<dbReference type="InterPro" id="IPR000456">
    <property type="entry name" value="Ribosomal_bL17"/>
</dbReference>
<dbReference type="InterPro" id="IPR047859">
    <property type="entry name" value="Ribosomal_bL17_CS"/>
</dbReference>
<dbReference type="InterPro" id="IPR036373">
    <property type="entry name" value="Ribosomal_bL17_sf"/>
</dbReference>
<dbReference type="NCBIfam" id="TIGR00059">
    <property type="entry name" value="L17"/>
    <property type="match status" value="1"/>
</dbReference>
<dbReference type="PANTHER" id="PTHR14413:SF16">
    <property type="entry name" value="LARGE RIBOSOMAL SUBUNIT PROTEIN BL17M"/>
    <property type="match status" value="1"/>
</dbReference>
<dbReference type="PANTHER" id="PTHR14413">
    <property type="entry name" value="RIBOSOMAL PROTEIN L17"/>
    <property type="match status" value="1"/>
</dbReference>
<dbReference type="Pfam" id="PF01196">
    <property type="entry name" value="Ribosomal_L17"/>
    <property type="match status" value="1"/>
</dbReference>
<dbReference type="SUPFAM" id="SSF64263">
    <property type="entry name" value="Prokaryotic ribosomal protein L17"/>
    <property type="match status" value="1"/>
</dbReference>
<dbReference type="PROSITE" id="PS01167">
    <property type="entry name" value="RIBOSOMAL_L17"/>
    <property type="match status" value="1"/>
</dbReference>
<evidence type="ECO:0000255" key="1">
    <source>
        <dbReference type="HAMAP-Rule" id="MF_01368"/>
    </source>
</evidence>
<evidence type="ECO:0000305" key="2"/>
<organism>
    <name type="scientific">Histophilus somni (strain 129Pt)</name>
    <name type="common">Haemophilus somnus</name>
    <dbReference type="NCBI Taxonomy" id="205914"/>
    <lineage>
        <taxon>Bacteria</taxon>
        <taxon>Pseudomonadati</taxon>
        <taxon>Pseudomonadota</taxon>
        <taxon>Gammaproteobacteria</taxon>
        <taxon>Pasteurellales</taxon>
        <taxon>Pasteurellaceae</taxon>
        <taxon>Histophilus</taxon>
    </lineage>
</organism>
<feature type="chain" id="PRO_0000267880" description="Large ribosomal subunit protein bL17">
    <location>
        <begin position="1"/>
        <end position="128"/>
    </location>
</feature>
<proteinExistence type="inferred from homology"/>